<accession>O31643</accession>
<keyword id="KW-1185">Reference proteome</keyword>
<keyword id="KW-0732">Signal</keyword>
<protein>
    <recommendedName>
        <fullName>Uncharacterized protein YjdB</fullName>
    </recommendedName>
</protein>
<sequence length="115" mass="12394">MNFKKTVVSALSISALALSVSGVASAHEINSTPTEVKNISISPTHVIKIQDYNLPLKVGETYSVKNNSATRYWTDNQKVAEVDQNGLVTAKSKGKATITLFKGTAVFGKVYVTVY</sequence>
<name>YJDB_BACSU</name>
<gene>
    <name type="primary">yjdB</name>
    <name type="ordered locus">BSU11990</name>
</gene>
<proteinExistence type="evidence at transcript level"/>
<organism>
    <name type="scientific">Bacillus subtilis (strain 168)</name>
    <dbReference type="NCBI Taxonomy" id="224308"/>
    <lineage>
        <taxon>Bacteria</taxon>
        <taxon>Bacillati</taxon>
        <taxon>Bacillota</taxon>
        <taxon>Bacilli</taxon>
        <taxon>Bacillales</taxon>
        <taxon>Bacillaceae</taxon>
        <taxon>Bacillus</taxon>
    </lineage>
</organism>
<comment type="induction">
    <text evidence="2">Expression is induced in response to phosphate starvation in a PhoR-dependent manner.</text>
</comment>
<dbReference type="EMBL" id="AL009126">
    <property type="protein sequence ID" value="CAB13056.1"/>
    <property type="molecule type" value="Genomic_DNA"/>
</dbReference>
<dbReference type="PIR" id="E69848">
    <property type="entry name" value="E69848"/>
</dbReference>
<dbReference type="RefSeq" id="NP_389081.1">
    <property type="nucleotide sequence ID" value="NC_000964.3"/>
</dbReference>
<dbReference type="RefSeq" id="WP_003232839.1">
    <property type="nucleotide sequence ID" value="NZ_OZ025638.1"/>
</dbReference>
<dbReference type="SMR" id="O31643"/>
<dbReference type="FunCoup" id="O31643">
    <property type="interactions" value="34"/>
</dbReference>
<dbReference type="STRING" id="224308.BSU11990"/>
<dbReference type="PaxDb" id="224308-BSU11990"/>
<dbReference type="DNASU" id="936431"/>
<dbReference type="EnsemblBacteria" id="CAB13056">
    <property type="protein sequence ID" value="CAB13056"/>
    <property type="gene ID" value="BSU_11990"/>
</dbReference>
<dbReference type="GeneID" id="936431"/>
<dbReference type="KEGG" id="bsu:BSU11990"/>
<dbReference type="PATRIC" id="fig|224308.179.peg.1294"/>
<dbReference type="InParanoid" id="O31643"/>
<dbReference type="OrthoDB" id="2931633at2"/>
<dbReference type="BioCyc" id="BSUB:BSU11990-MONOMER"/>
<dbReference type="Proteomes" id="UP000001570">
    <property type="component" value="Chromosome"/>
</dbReference>
<dbReference type="Gene3D" id="2.60.40.1080">
    <property type="match status" value="1"/>
</dbReference>
<dbReference type="InterPro" id="IPR003343">
    <property type="entry name" value="Big_2"/>
</dbReference>
<dbReference type="InterPro" id="IPR008964">
    <property type="entry name" value="Invasin/intimin_cell_adhesion"/>
</dbReference>
<dbReference type="Pfam" id="PF02368">
    <property type="entry name" value="Big_2"/>
    <property type="match status" value="1"/>
</dbReference>
<dbReference type="SMART" id="SM00635">
    <property type="entry name" value="BID_2"/>
    <property type="match status" value="1"/>
</dbReference>
<dbReference type="SUPFAM" id="SSF49373">
    <property type="entry name" value="Invasin/intimin cell-adhesion fragments"/>
    <property type="match status" value="1"/>
</dbReference>
<reference key="1">
    <citation type="journal article" date="1997" name="Nature">
        <title>The complete genome sequence of the Gram-positive bacterium Bacillus subtilis.</title>
        <authorList>
            <person name="Kunst F."/>
            <person name="Ogasawara N."/>
            <person name="Moszer I."/>
            <person name="Albertini A.M."/>
            <person name="Alloni G."/>
            <person name="Azevedo V."/>
            <person name="Bertero M.G."/>
            <person name="Bessieres P."/>
            <person name="Bolotin A."/>
            <person name="Borchert S."/>
            <person name="Borriss R."/>
            <person name="Boursier L."/>
            <person name="Brans A."/>
            <person name="Braun M."/>
            <person name="Brignell S.C."/>
            <person name="Bron S."/>
            <person name="Brouillet S."/>
            <person name="Bruschi C.V."/>
            <person name="Caldwell B."/>
            <person name="Capuano V."/>
            <person name="Carter N.M."/>
            <person name="Choi S.-K."/>
            <person name="Codani J.-J."/>
            <person name="Connerton I.F."/>
            <person name="Cummings N.J."/>
            <person name="Daniel R.A."/>
            <person name="Denizot F."/>
            <person name="Devine K.M."/>
            <person name="Duesterhoeft A."/>
            <person name="Ehrlich S.D."/>
            <person name="Emmerson P.T."/>
            <person name="Entian K.-D."/>
            <person name="Errington J."/>
            <person name="Fabret C."/>
            <person name="Ferrari E."/>
            <person name="Foulger D."/>
            <person name="Fritz C."/>
            <person name="Fujita M."/>
            <person name="Fujita Y."/>
            <person name="Fuma S."/>
            <person name="Galizzi A."/>
            <person name="Galleron N."/>
            <person name="Ghim S.-Y."/>
            <person name="Glaser P."/>
            <person name="Goffeau A."/>
            <person name="Golightly E.J."/>
            <person name="Grandi G."/>
            <person name="Guiseppi G."/>
            <person name="Guy B.J."/>
            <person name="Haga K."/>
            <person name="Haiech J."/>
            <person name="Harwood C.R."/>
            <person name="Henaut A."/>
            <person name="Hilbert H."/>
            <person name="Holsappel S."/>
            <person name="Hosono S."/>
            <person name="Hullo M.-F."/>
            <person name="Itaya M."/>
            <person name="Jones L.-M."/>
            <person name="Joris B."/>
            <person name="Karamata D."/>
            <person name="Kasahara Y."/>
            <person name="Klaerr-Blanchard M."/>
            <person name="Klein C."/>
            <person name="Kobayashi Y."/>
            <person name="Koetter P."/>
            <person name="Koningstein G."/>
            <person name="Krogh S."/>
            <person name="Kumano M."/>
            <person name="Kurita K."/>
            <person name="Lapidus A."/>
            <person name="Lardinois S."/>
            <person name="Lauber J."/>
            <person name="Lazarevic V."/>
            <person name="Lee S.-M."/>
            <person name="Levine A."/>
            <person name="Liu H."/>
            <person name="Masuda S."/>
            <person name="Mauel C."/>
            <person name="Medigue C."/>
            <person name="Medina N."/>
            <person name="Mellado R.P."/>
            <person name="Mizuno M."/>
            <person name="Moestl D."/>
            <person name="Nakai S."/>
            <person name="Noback M."/>
            <person name="Noone D."/>
            <person name="O'Reilly M."/>
            <person name="Ogawa K."/>
            <person name="Ogiwara A."/>
            <person name="Oudega B."/>
            <person name="Park S.-H."/>
            <person name="Parro V."/>
            <person name="Pohl T.M."/>
            <person name="Portetelle D."/>
            <person name="Porwollik S."/>
            <person name="Prescott A.M."/>
            <person name="Presecan E."/>
            <person name="Pujic P."/>
            <person name="Purnelle B."/>
            <person name="Rapoport G."/>
            <person name="Rey M."/>
            <person name="Reynolds S."/>
            <person name="Rieger M."/>
            <person name="Rivolta C."/>
            <person name="Rocha E."/>
            <person name="Roche B."/>
            <person name="Rose M."/>
            <person name="Sadaie Y."/>
            <person name="Sato T."/>
            <person name="Scanlan E."/>
            <person name="Schleich S."/>
            <person name="Schroeter R."/>
            <person name="Scoffone F."/>
            <person name="Sekiguchi J."/>
            <person name="Sekowska A."/>
            <person name="Seror S.J."/>
            <person name="Serror P."/>
            <person name="Shin B.-S."/>
            <person name="Soldo B."/>
            <person name="Sorokin A."/>
            <person name="Tacconi E."/>
            <person name="Takagi T."/>
            <person name="Takahashi H."/>
            <person name="Takemaru K."/>
            <person name="Takeuchi M."/>
            <person name="Tamakoshi A."/>
            <person name="Tanaka T."/>
            <person name="Terpstra P."/>
            <person name="Tognoni A."/>
            <person name="Tosato V."/>
            <person name="Uchiyama S."/>
            <person name="Vandenbol M."/>
            <person name="Vannier F."/>
            <person name="Vassarotti A."/>
            <person name="Viari A."/>
            <person name="Wambutt R."/>
            <person name="Wedler E."/>
            <person name="Wedler H."/>
            <person name="Weitzenegger T."/>
            <person name="Winters P."/>
            <person name="Wipat A."/>
            <person name="Yamamoto H."/>
            <person name="Yamane K."/>
            <person name="Yasumoto K."/>
            <person name="Yata K."/>
            <person name="Yoshida K."/>
            <person name="Yoshikawa H.-F."/>
            <person name="Zumstein E."/>
            <person name="Yoshikawa H."/>
            <person name="Danchin A."/>
        </authorList>
    </citation>
    <scope>NUCLEOTIDE SEQUENCE [LARGE SCALE GENOMIC DNA]</scope>
    <source>
        <strain>168</strain>
    </source>
</reference>
<reference key="2">
    <citation type="journal article" date="2005" name="J. Bacteriol.">
        <title>Genome-wide transcriptional analysis of the phosphate starvation stimulon of Bacillus subtilis.</title>
        <authorList>
            <person name="Allenby N.E.E."/>
            <person name="O'Connor N."/>
            <person name="Pragai Z."/>
            <person name="Ward A.C."/>
            <person name="Wipat A."/>
            <person name="Harwood C.R."/>
        </authorList>
    </citation>
    <scope>INDUCTION BY PHOSPHATE STARVATION</scope>
    <source>
        <strain>168</strain>
    </source>
</reference>
<feature type="signal peptide" evidence="1">
    <location>
        <begin position="1"/>
        <end position="26"/>
    </location>
</feature>
<feature type="chain" id="PRO_0000390883" description="Uncharacterized protein YjdB">
    <location>
        <begin position="27"/>
        <end position="115"/>
    </location>
</feature>
<feature type="domain" description="BIG2" evidence="1">
    <location>
        <begin position="36"/>
        <end position="114"/>
    </location>
</feature>
<evidence type="ECO:0000255" key="1"/>
<evidence type="ECO:0000269" key="2">
    <source>
    </source>
</evidence>